<name>Y1826_BURCH</name>
<keyword id="KW-0963">Cytoplasm</keyword>
<keyword id="KW-0238">DNA-binding</keyword>
<accession>A0K7V0</accession>
<organism>
    <name type="scientific">Burkholderia cenocepacia (strain HI2424)</name>
    <dbReference type="NCBI Taxonomy" id="331272"/>
    <lineage>
        <taxon>Bacteria</taxon>
        <taxon>Pseudomonadati</taxon>
        <taxon>Pseudomonadota</taxon>
        <taxon>Betaproteobacteria</taxon>
        <taxon>Burkholderiales</taxon>
        <taxon>Burkholderiaceae</taxon>
        <taxon>Burkholderia</taxon>
        <taxon>Burkholderia cepacia complex</taxon>
    </lineage>
</organism>
<proteinExistence type="inferred from homology"/>
<protein>
    <recommendedName>
        <fullName evidence="1">Nucleoid-associated protein Bcen2424_1826</fullName>
    </recommendedName>
</protein>
<feature type="chain" id="PRO_1000003700" description="Nucleoid-associated protein Bcen2424_1826">
    <location>
        <begin position="1"/>
        <end position="108"/>
    </location>
</feature>
<feature type="region of interest" description="Disordered" evidence="2">
    <location>
        <begin position="85"/>
        <end position="108"/>
    </location>
</feature>
<feature type="compositionally biased region" description="Polar residues" evidence="2">
    <location>
        <begin position="85"/>
        <end position="95"/>
    </location>
</feature>
<feature type="compositionally biased region" description="Pro residues" evidence="2">
    <location>
        <begin position="99"/>
        <end position="108"/>
    </location>
</feature>
<gene>
    <name type="ordered locus">Bcen2424_1826</name>
</gene>
<sequence length="108" mass="11769">MLKGNLAGLMKQAQQMQENMKKMQEQLALIEVEGQSGAGLVKVTMTCRNEVRRVSIDPSLLADDKDMLEDLVAAAFNDAVRKAEATSQEKMSGMTSGLPLPPGFKLPF</sequence>
<dbReference type="EMBL" id="CP000458">
    <property type="protein sequence ID" value="ABK08577.1"/>
    <property type="molecule type" value="Genomic_DNA"/>
</dbReference>
<dbReference type="RefSeq" id="WP_006482124.1">
    <property type="nucleotide sequence ID" value="NC_008542.1"/>
</dbReference>
<dbReference type="SMR" id="A0K7V0"/>
<dbReference type="KEGG" id="bch:Bcen2424_1826"/>
<dbReference type="HOGENOM" id="CLU_140930_0_0_4"/>
<dbReference type="GO" id="GO:0043590">
    <property type="term" value="C:bacterial nucleoid"/>
    <property type="evidence" value="ECO:0007669"/>
    <property type="project" value="UniProtKB-UniRule"/>
</dbReference>
<dbReference type="GO" id="GO:0005829">
    <property type="term" value="C:cytosol"/>
    <property type="evidence" value="ECO:0007669"/>
    <property type="project" value="TreeGrafter"/>
</dbReference>
<dbReference type="GO" id="GO:0003677">
    <property type="term" value="F:DNA binding"/>
    <property type="evidence" value="ECO:0007669"/>
    <property type="project" value="UniProtKB-UniRule"/>
</dbReference>
<dbReference type="FunFam" id="3.30.1310.10:FF:000001">
    <property type="entry name" value="Nucleoid-associated protein YbaB"/>
    <property type="match status" value="1"/>
</dbReference>
<dbReference type="Gene3D" id="3.30.1310.10">
    <property type="entry name" value="Nucleoid-associated protein YbaB-like domain"/>
    <property type="match status" value="1"/>
</dbReference>
<dbReference type="HAMAP" id="MF_00274">
    <property type="entry name" value="DNA_YbaB_EbfC"/>
    <property type="match status" value="1"/>
</dbReference>
<dbReference type="InterPro" id="IPR036894">
    <property type="entry name" value="YbaB-like_sf"/>
</dbReference>
<dbReference type="InterPro" id="IPR004401">
    <property type="entry name" value="YbaB/EbfC"/>
</dbReference>
<dbReference type="NCBIfam" id="TIGR00103">
    <property type="entry name" value="DNA_YbaB_EbfC"/>
    <property type="match status" value="1"/>
</dbReference>
<dbReference type="PANTHER" id="PTHR33449">
    <property type="entry name" value="NUCLEOID-ASSOCIATED PROTEIN YBAB"/>
    <property type="match status" value="1"/>
</dbReference>
<dbReference type="PANTHER" id="PTHR33449:SF1">
    <property type="entry name" value="NUCLEOID-ASSOCIATED PROTEIN YBAB"/>
    <property type="match status" value="1"/>
</dbReference>
<dbReference type="Pfam" id="PF02575">
    <property type="entry name" value="YbaB_DNA_bd"/>
    <property type="match status" value="1"/>
</dbReference>
<dbReference type="PIRSF" id="PIRSF004555">
    <property type="entry name" value="UCP004555"/>
    <property type="match status" value="1"/>
</dbReference>
<dbReference type="SUPFAM" id="SSF82607">
    <property type="entry name" value="YbaB-like"/>
    <property type="match status" value="1"/>
</dbReference>
<reference key="1">
    <citation type="submission" date="2006-08" db="EMBL/GenBank/DDBJ databases">
        <title>Complete sequence of chromosome 1 of Burkholderia cenocepacia HI2424.</title>
        <authorList>
            <person name="Copeland A."/>
            <person name="Lucas S."/>
            <person name="Lapidus A."/>
            <person name="Barry K."/>
            <person name="Detter J.C."/>
            <person name="Glavina del Rio T."/>
            <person name="Hammon N."/>
            <person name="Israni S."/>
            <person name="Pitluck S."/>
            <person name="Chain P."/>
            <person name="Malfatti S."/>
            <person name="Shin M."/>
            <person name="Vergez L."/>
            <person name="Schmutz J."/>
            <person name="Larimer F."/>
            <person name="Land M."/>
            <person name="Hauser L."/>
            <person name="Kyrpides N."/>
            <person name="Kim E."/>
            <person name="LiPuma J.J."/>
            <person name="Gonzalez C.F."/>
            <person name="Konstantinidis K."/>
            <person name="Tiedje J.M."/>
            <person name="Richardson P."/>
        </authorList>
    </citation>
    <scope>NUCLEOTIDE SEQUENCE [LARGE SCALE GENOMIC DNA]</scope>
    <source>
        <strain>HI2424</strain>
    </source>
</reference>
<comment type="function">
    <text evidence="1">Binds to DNA and alters its conformation. May be involved in regulation of gene expression, nucleoid organization and DNA protection.</text>
</comment>
<comment type="subunit">
    <text evidence="1">Homodimer.</text>
</comment>
<comment type="subcellular location">
    <subcellularLocation>
        <location evidence="1">Cytoplasm</location>
        <location evidence="1">Nucleoid</location>
    </subcellularLocation>
</comment>
<comment type="similarity">
    <text evidence="1">Belongs to the YbaB/EbfC family.</text>
</comment>
<evidence type="ECO:0000255" key="1">
    <source>
        <dbReference type="HAMAP-Rule" id="MF_00274"/>
    </source>
</evidence>
<evidence type="ECO:0000256" key="2">
    <source>
        <dbReference type="SAM" id="MobiDB-lite"/>
    </source>
</evidence>